<dbReference type="EC" id="2.3.1.274" evidence="1"/>
<dbReference type="EMBL" id="BA000022">
    <property type="protein sequence ID" value="BAA18017.1"/>
    <property type="molecule type" value="Genomic_DNA"/>
</dbReference>
<dbReference type="PIR" id="S75456">
    <property type="entry name" value="S75456"/>
</dbReference>
<dbReference type="SMR" id="P73950"/>
<dbReference type="FunCoup" id="P73950">
    <property type="interactions" value="289"/>
</dbReference>
<dbReference type="STRING" id="1148.gene:10498887"/>
<dbReference type="PaxDb" id="1148-1653101"/>
<dbReference type="EnsemblBacteria" id="BAA18017">
    <property type="protein sequence ID" value="BAA18017"/>
    <property type="gene ID" value="BAA18017"/>
</dbReference>
<dbReference type="KEGG" id="syn:slr1510"/>
<dbReference type="eggNOG" id="COG0416">
    <property type="taxonomic scope" value="Bacteria"/>
</dbReference>
<dbReference type="InParanoid" id="P73950"/>
<dbReference type="PhylomeDB" id="P73950"/>
<dbReference type="BRENDA" id="2.3.1.274">
    <property type="organism ID" value="6192"/>
</dbReference>
<dbReference type="UniPathway" id="UPA00085"/>
<dbReference type="Proteomes" id="UP000001425">
    <property type="component" value="Chromosome"/>
</dbReference>
<dbReference type="GO" id="GO:0005737">
    <property type="term" value="C:cytoplasm"/>
    <property type="evidence" value="ECO:0007669"/>
    <property type="project" value="UniProtKB-SubCell"/>
</dbReference>
<dbReference type="GO" id="GO:0043811">
    <property type="term" value="F:phosphate:acyl-[acyl carrier protein] acyltransferase activity"/>
    <property type="evidence" value="ECO:0007669"/>
    <property type="project" value="UniProtKB-UniRule"/>
</dbReference>
<dbReference type="GO" id="GO:0006633">
    <property type="term" value="P:fatty acid biosynthetic process"/>
    <property type="evidence" value="ECO:0007669"/>
    <property type="project" value="UniProtKB-UniRule"/>
</dbReference>
<dbReference type="GO" id="GO:0008654">
    <property type="term" value="P:phospholipid biosynthetic process"/>
    <property type="evidence" value="ECO:0007669"/>
    <property type="project" value="UniProtKB-KW"/>
</dbReference>
<dbReference type="Gene3D" id="3.40.718.10">
    <property type="entry name" value="Isopropylmalate Dehydrogenase"/>
    <property type="match status" value="1"/>
</dbReference>
<dbReference type="HAMAP" id="MF_00019">
    <property type="entry name" value="PlsX"/>
    <property type="match status" value="1"/>
</dbReference>
<dbReference type="InterPro" id="IPR003664">
    <property type="entry name" value="FA_synthesis"/>
</dbReference>
<dbReference type="InterPro" id="IPR012281">
    <property type="entry name" value="Phospholipid_synth_PlsX-like"/>
</dbReference>
<dbReference type="NCBIfam" id="TIGR00182">
    <property type="entry name" value="plsX"/>
    <property type="match status" value="1"/>
</dbReference>
<dbReference type="PANTHER" id="PTHR30100">
    <property type="entry name" value="FATTY ACID/PHOSPHOLIPID SYNTHESIS PROTEIN PLSX"/>
    <property type="match status" value="1"/>
</dbReference>
<dbReference type="PANTHER" id="PTHR30100:SF1">
    <property type="entry name" value="PHOSPHATE ACYLTRANSFERASE"/>
    <property type="match status" value="1"/>
</dbReference>
<dbReference type="Pfam" id="PF02504">
    <property type="entry name" value="FA_synthesis"/>
    <property type="match status" value="1"/>
</dbReference>
<dbReference type="PIRSF" id="PIRSF002465">
    <property type="entry name" value="Phsphlp_syn_PlsX"/>
    <property type="match status" value="1"/>
</dbReference>
<dbReference type="SUPFAM" id="SSF53659">
    <property type="entry name" value="Isocitrate/Isopropylmalate dehydrogenase-like"/>
    <property type="match status" value="1"/>
</dbReference>
<evidence type="ECO:0000255" key="1">
    <source>
        <dbReference type="HAMAP-Rule" id="MF_00019"/>
    </source>
</evidence>
<keyword id="KW-0963">Cytoplasm</keyword>
<keyword id="KW-0444">Lipid biosynthesis</keyword>
<keyword id="KW-0443">Lipid metabolism</keyword>
<keyword id="KW-0594">Phospholipid biosynthesis</keyword>
<keyword id="KW-1208">Phospholipid metabolism</keyword>
<keyword id="KW-1185">Reference proteome</keyword>
<keyword id="KW-0808">Transferase</keyword>
<sequence length="348" mass="37285">MAVTRAKIALDAMGGDYAPEEIVIGAIRASQELDVDIFLVGDRQAIEDCLNRHPHQGINLTIVDAEGVVEMEEDAVVVRRKPKASINVAMNLVKEKQADAVVSAGHSGAAMAAALLRLGRLKGIDRPAIGTLFPTMVPGKSVIVLDVGANVDCKPKYLEQFALMGTVYSQYVLGVDSPKVGLLNIGEESNKGNTLALQTHELLQSNPEIPFVGNAEGRDVLSGNFDVIVCDGFVGNIVLKFAEAVGEILLSIVKEELPRGWRGKLGAIILAPNLKRIKQRVDHAEHGGALLFGVDGVCVISHGSSRSGSIFNAIRLAKEAIDNQVSVRINSSTSLLMERQKTEELQNI</sequence>
<name>PLSX_SYNY3</name>
<protein>
    <recommendedName>
        <fullName evidence="1">Phosphate acyltransferase</fullName>
        <ecNumber evidence="1">2.3.1.274</ecNumber>
    </recommendedName>
    <alternativeName>
        <fullName evidence="1">Acyl-ACP phosphotransacylase</fullName>
    </alternativeName>
    <alternativeName>
        <fullName evidence="1">Acyl-[acyl-carrier-protein]--phosphate acyltransferase</fullName>
    </alternativeName>
    <alternativeName>
        <fullName evidence="1">Phosphate-acyl-ACP acyltransferase</fullName>
    </alternativeName>
</protein>
<organism>
    <name type="scientific">Synechocystis sp. (strain ATCC 27184 / PCC 6803 / Kazusa)</name>
    <dbReference type="NCBI Taxonomy" id="1111708"/>
    <lineage>
        <taxon>Bacteria</taxon>
        <taxon>Bacillati</taxon>
        <taxon>Cyanobacteriota</taxon>
        <taxon>Cyanophyceae</taxon>
        <taxon>Synechococcales</taxon>
        <taxon>Merismopediaceae</taxon>
        <taxon>Synechocystis</taxon>
    </lineage>
</organism>
<comment type="function">
    <text evidence="1">Catalyzes the reversible formation of acyl-phosphate (acyl-PO(4)) from acyl-[acyl-carrier-protein] (acyl-ACP). This enzyme utilizes acyl-ACP as fatty acyl donor, but not acyl-CoA.</text>
</comment>
<comment type="catalytic activity">
    <reaction evidence="1">
        <text>a fatty acyl-[ACP] + phosphate = an acyl phosphate + holo-[ACP]</text>
        <dbReference type="Rhea" id="RHEA:42292"/>
        <dbReference type="Rhea" id="RHEA-COMP:9685"/>
        <dbReference type="Rhea" id="RHEA-COMP:14125"/>
        <dbReference type="ChEBI" id="CHEBI:43474"/>
        <dbReference type="ChEBI" id="CHEBI:59918"/>
        <dbReference type="ChEBI" id="CHEBI:64479"/>
        <dbReference type="ChEBI" id="CHEBI:138651"/>
        <dbReference type="EC" id="2.3.1.274"/>
    </reaction>
</comment>
<comment type="pathway">
    <text evidence="1">Lipid metabolism; phospholipid metabolism.</text>
</comment>
<comment type="subunit">
    <text evidence="1">Homodimer. Probably interacts with PlsY.</text>
</comment>
<comment type="subcellular location">
    <subcellularLocation>
        <location evidence="1">Cytoplasm</location>
    </subcellularLocation>
    <text evidence="1">Associated with the membrane possibly through PlsY.</text>
</comment>
<comment type="similarity">
    <text evidence="1">Belongs to the PlsX family.</text>
</comment>
<proteinExistence type="inferred from homology"/>
<reference key="1">
    <citation type="journal article" date="1996" name="DNA Res.">
        <title>Sequence analysis of the genome of the unicellular cyanobacterium Synechocystis sp. strain PCC6803. II. Sequence determination of the entire genome and assignment of potential protein-coding regions.</title>
        <authorList>
            <person name="Kaneko T."/>
            <person name="Sato S."/>
            <person name="Kotani H."/>
            <person name="Tanaka A."/>
            <person name="Asamizu E."/>
            <person name="Nakamura Y."/>
            <person name="Miyajima N."/>
            <person name="Hirosawa M."/>
            <person name="Sugiura M."/>
            <person name="Sasamoto S."/>
            <person name="Kimura T."/>
            <person name="Hosouchi T."/>
            <person name="Matsuno A."/>
            <person name="Muraki A."/>
            <person name="Nakazaki N."/>
            <person name="Naruo K."/>
            <person name="Okumura S."/>
            <person name="Shimpo S."/>
            <person name="Takeuchi C."/>
            <person name="Wada T."/>
            <person name="Watanabe A."/>
            <person name="Yamada M."/>
            <person name="Yasuda M."/>
            <person name="Tabata S."/>
        </authorList>
    </citation>
    <scope>NUCLEOTIDE SEQUENCE [LARGE SCALE GENOMIC DNA]</scope>
    <source>
        <strain>ATCC 27184 / PCC 6803 / Kazusa</strain>
    </source>
</reference>
<gene>
    <name evidence="1" type="primary">plsX</name>
    <name type="ordered locus">slr1510</name>
</gene>
<feature type="chain" id="PRO_0000189956" description="Phosphate acyltransferase">
    <location>
        <begin position="1"/>
        <end position="348"/>
    </location>
</feature>
<accession>P73950</accession>